<evidence type="ECO:0000255" key="1">
    <source>
        <dbReference type="PROSITE-ProRule" id="PRU00133"/>
    </source>
</evidence>
<evidence type="ECO:0000256" key="2">
    <source>
        <dbReference type="SAM" id="MobiDB-lite"/>
    </source>
</evidence>
<evidence type="ECO:0000269" key="3">
    <source>
    </source>
</evidence>
<evidence type="ECO:0000303" key="4">
    <source>
    </source>
</evidence>
<proteinExistence type="evidence at protein level"/>
<reference key="1">
    <citation type="journal article" date="2005" name="J. Cell Sci.">
        <title>Profilin regulates the activity of p42POP, a novel Myb-related transcription factor.</title>
        <authorList>
            <person name="Lederer M."/>
            <person name="Jockusch B.M."/>
            <person name="Rothkegel M."/>
        </authorList>
    </citation>
    <scope>NUCLEOTIDE SEQUENCE [MRNA] (ISOFORM 1)</scope>
    <scope>FUNCTION</scope>
    <scope>INTERACTION WITH PFN1</scope>
    <scope>SUBCELLULAR LOCATION</scope>
    <scope>TISSUE SPECIFICITY</scope>
    <scope>MUTAGENESIS OF LEU-274 AND LEU-281</scope>
    <source>
        <strain>Swiss Webster / NIH</strain>
    </source>
</reference>
<reference key="2">
    <citation type="journal article" date="2004" name="Genome Res.">
        <title>The status, quality, and expansion of the NIH full-length cDNA project: the Mammalian Gene Collection (MGC).</title>
        <authorList>
            <consortium name="The MGC Project Team"/>
        </authorList>
    </citation>
    <scope>NUCLEOTIDE SEQUENCE [LARGE SCALE MRNA] (ISOFORM 2)</scope>
    <scope>NUCLEOTIDE SEQUENCE [LARGE SCALE MRNA] OF 126-393 (ISOFORM 1)</scope>
    <source>
        <tissue>Eye</tissue>
    </source>
</reference>
<name>MYPOP_MOUSE</name>
<dbReference type="EMBL" id="AF364868">
    <property type="protein sequence ID" value="AAL83995.1"/>
    <property type="molecule type" value="mRNA"/>
</dbReference>
<dbReference type="EMBL" id="BC042748">
    <property type="protein sequence ID" value="AAH42748.1"/>
    <property type="molecule type" value="mRNA"/>
</dbReference>
<dbReference type="EMBL" id="BC055832">
    <property type="protein sequence ID" value="AAH55832.1"/>
    <property type="molecule type" value="mRNA"/>
</dbReference>
<dbReference type="CCDS" id="CCDS39792.1">
    <molecule id="Q8R4U1-1"/>
</dbReference>
<dbReference type="RefSeq" id="NP_001407656.1">
    <molecule id="Q8R4U1-1"/>
    <property type="nucleotide sequence ID" value="NM_001420727.1"/>
</dbReference>
<dbReference type="RefSeq" id="NP_663554.1">
    <molecule id="Q8R4U1-1"/>
    <property type="nucleotide sequence ID" value="NM_145579.4"/>
</dbReference>
<dbReference type="RefSeq" id="XP_006539882.1">
    <property type="nucleotide sequence ID" value="XM_006539819.3"/>
</dbReference>
<dbReference type="SMR" id="Q8R4U1"/>
<dbReference type="BioGRID" id="231324">
    <property type="interactions" value="2"/>
</dbReference>
<dbReference type="FunCoup" id="Q8R4U1">
    <property type="interactions" value="665"/>
</dbReference>
<dbReference type="STRING" id="10090.ENSMUSP00000058718"/>
<dbReference type="GlyGen" id="Q8R4U1">
    <property type="glycosylation" value="2 sites"/>
</dbReference>
<dbReference type="iPTMnet" id="Q8R4U1"/>
<dbReference type="PhosphoSitePlus" id="Q8R4U1"/>
<dbReference type="PaxDb" id="10090-ENSMUSP00000058718"/>
<dbReference type="PeptideAtlas" id="Q8R4U1"/>
<dbReference type="ProteomicsDB" id="293607">
    <molecule id="Q8R4U1-1"/>
</dbReference>
<dbReference type="ProteomicsDB" id="293608">
    <molecule id="Q8R4U1-2"/>
</dbReference>
<dbReference type="Antibodypedia" id="45635">
    <property type="antibodies" value="17 antibodies from 9 providers"/>
</dbReference>
<dbReference type="DNASU" id="232934"/>
<dbReference type="Ensembl" id="ENSMUST00000059331.9">
    <molecule id="Q8R4U1-1"/>
    <property type="protein sequence ID" value="ENSMUSP00000058718.9"/>
    <property type="gene ID" value="ENSMUSG00000048481.16"/>
</dbReference>
<dbReference type="Ensembl" id="ENSMUST00000131087.2">
    <molecule id="Q8R4U1-1"/>
    <property type="protein sequence ID" value="ENSMUSP00000117357.2"/>
    <property type="gene ID" value="ENSMUSG00000048481.16"/>
</dbReference>
<dbReference type="GeneID" id="232934"/>
<dbReference type="KEGG" id="mmu:232934"/>
<dbReference type="UCSC" id="uc009fka.2">
    <molecule id="Q8R4U1-1"/>
    <property type="organism name" value="mouse"/>
</dbReference>
<dbReference type="AGR" id="MGI:2446472"/>
<dbReference type="CTD" id="339344"/>
<dbReference type="MGI" id="MGI:2446472">
    <property type="gene designation" value="Mypop"/>
</dbReference>
<dbReference type="VEuPathDB" id="HostDB:ENSMUSG00000048481"/>
<dbReference type="eggNOG" id="ENOG502RV5V">
    <property type="taxonomic scope" value="Eukaryota"/>
</dbReference>
<dbReference type="GeneTree" id="ENSGT00450000040421"/>
<dbReference type="HOGENOM" id="CLU_046143_2_0_1"/>
<dbReference type="InParanoid" id="Q8R4U1"/>
<dbReference type="OMA" id="NPQEGGC"/>
<dbReference type="OrthoDB" id="9940550at2759"/>
<dbReference type="PhylomeDB" id="Q8R4U1"/>
<dbReference type="TreeFam" id="TF338618"/>
<dbReference type="BioGRID-ORCS" id="232934">
    <property type="hits" value="4 hits in 77 CRISPR screens"/>
</dbReference>
<dbReference type="ChiTaRS" id="Mypop">
    <property type="organism name" value="mouse"/>
</dbReference>
<dbReference type="PRO" id="PR:Q8R4U1"/>
<dbReference type="Proteomes" id="UP000000589">
    <property type="component" value="Chromosome 7"/>
</dbReference>
<dbReference type="RNAct" id="Q8R4U1">
    <property type="molecule type" value="protein"/>
</dbReference>
<dbReference type="Bgee" id="ENSMUSG00000048481">
    <property type="expression patterns" value="Expressed in perirhinal cortex and 187 other cell types or tissues"/>
</dbReference>
<dbReference type="GO" id="GO:0005634">
    <property type="term" value="C:nucleus"/>
    <property type="evidence" value="ECO:0000314"/>
    <property type="project" value="MGI"/>
</dbReference>
<dbReference type="GO" id="GO:0003677">
    <property type="term" value="F:DNA binding"/>
    <property type="evidence" value="ECO:0000314"/>
    <property type="project" value="MGI"/>
</dbReference>
<dbReference type="GO" id="GO:0003700">
    <property type="term" value="F:DNA-binding transcription factor activity"/>
    <property type="evidence" value="ECO:0000314"/>
    <property type="project" value="MGI"/>
</dbReference>
<dbReference type="GO" id="GO:0001227">
    <property type="term" value="F:DNA-binding transcription repressor activity, RNA polymerase II-specific"/>
    <property type="evidence" value="ECO:0000314"/>
    <property type="project" value="NTNU_SB"/>
</dbReference>
<dbReference type="GO" id="GO:0042802">
    <property type="term" value="F:identical protein binding"/>
    <property type="evidence" value="ECO:0000353"/>
    <property type="project" value="MGI"/>
</dbReference>
<dbReference type="GO" id="GO:0000978">
    <property type="term" value="F:RNA polymerase II cis-regulatory region sequence-specific DNA binding"/>
    <property type="evidence" value="ECO:0000314"/>
    <property type="project" value="NTNU_SB"/>
</dbReference>
<dbReference type="GO" id="GO:0000122">
    <property type="term" value="P:negative regulation of transcription by RNA polymerase II"/>
    <property type="evidence" value="ECO:0000314"/>
    <property type="project" value="NTNU_SB"/>
</dbReference>
<dbReference type="GO" id="GO:0006357">
    <property type="term" value="P:regulation of transcription by RNA polymerase II"/>
    <property type="evidence" value="ECO:0000316"/>
    <property type="project" value="MGI"/>
</dbReference>
<dbReference type="CDD" id="cd00167">
    <property type="entry name" value="SANT"/>
    <property type="match status" value="1"/>
</dbReference>
<dbReference type="Gene3D" id="1.10.10.60">
    <property type="entry name" value="Homeodomain-like"/>
    <property type="match status" value="1"/>
</dbReference>
<dbReference type="InterPro" id="IPR052870">
    <property type="entry name" value="Myb-related_repressor"/>
</dbReference>
<dbReference type="InterPro" id="IPR028002">
    <property type="entry name" value="Myb_DNA-bind_5"/>
</dbReference>
<dbReference type="InterPro" id="IPR001005">
    <property type="entry name" value="SANT/Myb"/>
</dbReference>
<dbReference type="PANTHER" id="PTHR32345">
    <property type="entry name" value="MYB-RELATED TRANSCRIPTION FACTOR, PARTNER OF PROFILIN"/>
    <property type="match status" value="1"/>
</dbReference>
<dbReference type="PANTHER" id="PTHR32345:SF3">
    <property type="entry name" value="MYB-RELATED TRANSCRIPTION FACTOR, PARTNER OF PROFILIN"/>
    <property type="match status" value="1"/>
</dbReference>
<dbReference type="Pfam" id="PF13873">
    <property type="entry name" value="Myb_DNA-bind_5"/>
    <property type="match status" value="1"/>
</dbReference>
<dbReference type="PRINTS" id="PR01217">
    <property type="entry name" value="PRICHEXTENSN"/>
</dbReference>
<dbReference type="SMART" id="SM00717">
    <property type="entry name" value="SANT"/>
    <property type="match status" value="1"/>
</dbReference>
<dbReference type="PROSITE" id="PS50090">
    <property type="entry name" value="MYB_LIKE"/>
    <property type="match status" value="1"/>
</dbReference>
<feature type="chain" id="PRO_0000344800" description="Myb-related transcription factor, partner of profilin">
    <location>
        <begin position="1"/>
        <end position="393"/>
    </location>
</feature>
<feature type="domain" description="Myb-like" evidence="1">
    <location>
        <begin position="16"/>
        <end position="88"/>
    </location>
</feature>
<feature type="region of interest" description="Disordered" evidence="2">
    <location>
        <begin position="1"/>
        <end position="21"/>
    </location>
</feature>
<feature type="region of interest" description="Disordered" evidence="2">
    <location>
        <begin position="125"/>
        <end position="254"/>
    </location>
</feature>
<feature type="region of interest" description="Disordered" evidence="2">
    <location>
        <begin position="290"/>
        <end position="323"/>
    </location>
</feature>
<feature type="region of interest" description="Disordered" evidence="2">
    <location>
        <begin position="348"/>
        <end position="393"/>
    </location>
</feature>
<feature type="short sequence motif" description="Nuclear localization signal">
    <location>
        <begin position="87"/>
        <end position="90"/>
    </location>
</feature>
<feature type="short sequence motif" description="Nuclear localization signal">
    <location>
        <begin position="376"/>
        <end position="379"/>
    </location>
</feature>
<feature type="short sequence motif" description="Nuclear localization signal">
    <location>
        <begin position="384"/>
        <end position="387"/>
    </location>
</feature>
<feature type="compositionally biased region" description="Low complexity" evidence="2">
    <location>
        <begin position="1"/>
        <end position="11"/>
    </location>
</feature>
<feature type="compositionally biased region" description="Low complexity" evidence="2">
    <location>
        <begin position="142"/>
        <end position="157"/>
    </location>
</feature>
<feature type="compositionally biased region" description="Basic and acidic residues" evidence="2">
    <location>
        <begin position="160"/>
        <end position="171"/>
    </location>
</feature>
<feature type="compositionally biased region" description="Polar residues" evidence="2">
    <location>
        <begin position="173"/>
        <end position="184"/>
    </location>
</feature>
<feature type="compositionally biased region" description="Pro residues" evidence="2">
    <location>
        <begin position="219"/>
        <end position="229"/>
    </location>
</feature>
<feature type="compositionally biased region" description="Pro residues" evidence="2">
    <location>
        <begin position="238"/>
        <end position="247"/>
    </location>
</feature>
<feature type="compositionally biased region" description="Pro residues" evidence="2">
    <location>
        <begin position="296"/>
        <end position="320"/>
    </location>
</feature>
<feature type="compositionally biased region" description="Pro residues" evidence="2">
    <location>
        <begin position="359"/>
        <end position="368"/>
    </location>
</feature>
<feature type="compositionally biased region" description="Basic residues" evidence="2">
    <location>
        <begin position="375"/>
        <end position="393"/>
    </location>
</feature>
<feature type="splice variant" id="VSP_034858" description="In isoform 2." evidence="4">
    <original>DTPAQSKG</original>
    <variation>GESQSQFL</variation>
    <location>
        <begin position="171"/>
        <end position="178"/>
    </location>
</feature>
<feature type="splice variant" id="VSP_034859" description="In isoform 2." evidence="4">
    <location>
        <begin position="179"/>
        <end position="393"/>
    </location>
</feature>
<feature type="mutagenesis site" description="Reduction in homodimerization. Abolishes homodimerization; when associated with P-281." evidence="3">
    <original>L</original>
    <variation>A</variation>
    <location>
        <position position="274"/>
    </location>
</feature>
<feature type="mutagenesis site" description="Reduction in homodimerization. Abolishes homodimerization; when associated with A-281." evidence="3">
    <original>L</original>
    <variation>P</variation>
    <location>
        <position position="274"/>
    </location>
</feature>
<feature type="mutagenesis site" description="Reduction in homodimerization." evidence="3">
    <original>L</original>
    <variation>A</variation>
    <location>
        <position position="281"/>
    </location>
</feature>
<feature type="mutagenesis site" description="Reduction in homodimerization." evidence="3">
    <original>L</original>
    <variation>P</variation>
    <location>
        <position position="281"/>
    </location>
</feature>
<sequence>MASATAAAAPGEAEETTRLRKPRFSFEENQILIREVRAHYPQLYGAQSRRVSVAERRRVWDSIATKINGITSWKRTGQEVQKRWNDFKRRTKEKLARVPHSTQGAGPAAEDAFSAEEETIFAILGPGVAGPGAGSGAEESRAAASSQPQASTASTQRYVLSEDRRQDRRADTPAQSKGGSSSPESWARPSCNPQEAKERESTSPAAMQPVQLPRLALSPPLPAPPPPPTALAQVAPSSPSPTPPRPTSAPEQSLDFLRAQQETANAIRELAGTLRQGLAKLSEALSALLPLLPGTPADPLPPPPPPPPPPPPKPVLPPSAPKVELAPEPVSVVAAVVDGAVVAARGVIISPRSEEGVPKPLPPAPPLPLHDSPPHKRRKGFPTRKRRGRWKSP</sequence>
<accession>Q8R4U1</accession>
<accession>Q7TNR1</accession>
<accession>Q8CFP0</accession>
<protein>
    <recommendedName>
        <fullName>Myb-related transcription factor, partner of profilin</fullName>
    </recommendedName>
    <alternativeName>
        <fullName>Myb-related protein p42POP</fullName>
    </alternativeName>
    <alternativeName>
        <fullName>Partner of profilin</fullName>
    </alternativeName>
</protein>
<keyword id="KW-0025">Alternative splicing</keyword>
<keyword id="KW-0238">DNA-binding</keyword>
<keyword id="KW-0539">Nucleus</keyword>
<keyword id="KW-1185">Reference proteome</keyword>
<keyword id="KW-0678">Repressor</keyword>
<keyword id="KW-0804">Transcription</keyword>
<keyword id="KW-0805">Transcription regulation</keyword>
<comment type="function">
    <text evidence="3">Transcriptional repressor; DNA-binding protein that specifically recognizes the core sequence 5'-YAAC[GT]G-3'. Dimerization with PFN1 reduces its DNA-binding capacity.</text>
</comment>
<comment type="subunit">
    <text evidence="3">Interacts with PFN1. Homodimer and heterodimer with PFN1.</text>
</comment>
<comment type="subcellular location">
    <subcellularLocation>
        <location evidence="3">Nucleus</location>
    </subcellularLocation>
</comment>
<comment type="alternative products">
    <event type="alternative splicing"/>
    <isoform>
        <id>Q8R4U1-1</id>
        <name>1</name>
        <sequence type="displayed"/>
    </isoform>
    <isoform>
        <id>Q8R4U1-2</id>
        <name>2</name>
        <sequence type="described" ref="VSP_034858 VSP_034859"/>
    </isoform>
</comment>
<comment type="tissue specificity">
    <text evidence="3">Ubiquitous. Highly expressed in brain, liver and testis. Moderate expression in heart, lung and skeletal muscle. Low expression in spleen and kidney.</text>
</comment>
<comment type="domain">
    <text>The proline-rich region is required for PFN1 interaction.</text>
</comment>
<organism>
    <name type="scientific">Mus musculus</name>
    <name type="common">Mouse</name>
    <dbReference type="NCBI Taxonomy" id="10090"/>
    <lineage>
        <taxon>Eukaryota</taxon>
        <taxon>Metazoa</taxon>
        <taxon>Chordata</taxon>
        <taxon>Craniata</taxon>
        <taxon>Vertebrata</taxon>
        <taxon>Euteleostomi</taxon>
        <taxon>Mammalia</taxon>
        <taxon>Eutheria</taxon>
        <taxon>Euarchontoglires</taxon>
        <taxon>Glires</taxon>
        <taxon>Rodentia</taxon>
        <taxon>Myomorpha</taxon>
        <taxon>Muroidea</taxon>
        <taxon>Muridae</taxon>
        <taxon>Murinae</taxon>
        <taxon>Mus</taxon>
        <taxon>Mus</taxon>
    </lineage>
</organism>
<gene>
    <name type="primary">Mypop</name>
    <name type="synonym">P42pop</name>
</gene>